<feature type="chain" id="PRO_1000049545" description="Glycerol-3-phosphate dehydrogenase [NAD(P)+]">
    <location>
        <begin position="1"/>
        <end position="322"/>
    </location>
</feature>
<feature type="active site" description="Proton acceptor" evidence="1">
    <location>
        <position position="182"/>
    </location>
</feature>
<feature type="binding site" evidence="1">
    <location>
        <position position="13"/>
    </location>
    <ligand>
        <name>NADPH</name>
        <dbReference type="ChEBI" id="CHEBI:57783"/>
    </ligand>
</feature>
<feature type="binding site" evidence="1">
    <location>
        <position position="33"/>
    </location>
    <ligand>
        <name>NADPH</name>
        <dbReference type="ChEBI" id="CHEBI:57783"/>
    </ligand>
</feature>
<feature type="binding site" evidence="1">
    <location>
        <position position="99"/>
    </location>
    <ligand>
        <name>NADPH</name>
        <dbReference type="ChEBI" id="CHEBI:57783"/>
    </ligand>
</feature>
<feature type="binding site" evidence="1">
    <location>
        <position position="99"/>
    </location>
    <ligand>
        <name>sn-glycerol 3-phosphate</name>
        <dbReference type="ChEBI" id="CHEBI:57597"/>
    </ligand>
</feature>
<feature type="binding site" evidence="1">
    <location>
        <position position="127"/>
    </location>
    <ligand>
        <name>sn-glycerol 3-phosphate</name>
        <dbReference type="ChEBI" id="CHEBI:57597"/>
    </ligand>
</feature>
<feature type="binding site" evidence="1">
    <location>
        <position position="129"/>
    </location>
    <ligand>
        <name>sn-glycerol 3-phosphate</name>
        <dbReference type="ChEBI" id="CHEBI:57597"/>
    </ligand>
</feature>
<feature type="binding site" evidence="1">
    <location>
        <position position="131"/>
    </location>
    <ligand>
        <name>NADPH</name>
        <dbReference type="ChEBI" id="CHEBI:57783"/>
    </ligand>
</feature>
<feature type="binding site" evidence="1">
    <location>
        <position position="182"/>
    </location>
    <ligand>
        <name>sn-glycerol 3-phosphate</name>
        <dbReference type="ChEBI" id="CHEBI:57597"/>
    </ligand>
</feature>
<feature type="binding site" evidence="1">
    <location>
        <position position="235"/>
    </location>
    <ligand>
        <name>sn-glycerol 3-phosphate</name>
        <dbReference type="ChEBI" id="CHEBI:57597"/>
    </ligand>
</feature>
<feature type="binding site" evidence="1">
    <location>
        <position position="245"/>
    </location>
    <ligand>
        <name>sn-glycerol 3-phosphate</name>
        <dbReference type="ChEBI" id="CHEBI:57597"/>
    </ligand>
</feature>
<feature type="binding site" evidence="1">
    <location>
        <position position="246"/>
    </location>
    <ligand>
        <name>NADPH</name>
        <dbReference type="ChEBI" id="CHEBI:57783"/>
    </ligand>
</feature>
<feature type="binding site" evidence="1">
    <location>
        <position position="246"/>
    </location>
    <ligand>
        <name>sn-glycerol 3-phosphate</name>
        <dbReference type="ChEBI" id="CHEBI:57597"/>
    </ligand>
</feature>
<feature type="binding site" evidence="1">
    <location>
        <position position="247"/>
    </location>
    <ligand>
        <name>sn-glycerol 3-phosphate</name>
        <dbReference type="ChEBI" id="CHEBI:57597"/>
    </ligand>
</feature>
<feature type="binding site" evidence="1">
    <location>
        <position position="272"/>
    </location>
    <ligand>
        <name>NADPH</name>
        <dbReference type="ChEBI" id="CHEBI:57783"/>
    </ligand>
</feature>
<accession>A1AXJ0</accession>
<evidence type="ECO:0000255" key="1">
    <source>
        <dbReference type="HAMAP-Rule" id="MF_00394"/>
    </source>
</evidence>
<gene>
    <name evidence="1" type="primary">gpsA</name>
    <name type="ordered locus">Rmag_0934</name>
</gene>
<protein>
    <recommendedName>
        <fullName evidence="1">Glycerol-3-phosphate dehydrogenase [NAD(P)+]</fullName>
        <ecNumber evidence="1">1.1.1.94</ecNumber>
    </recommendedName>
    <alternativeName>
        <fullName evidence="1">NAD(P)(+)-dependent glycerol-3-phosphate dehydrogenase</fullName>
    </alternativeName>
    <alternativeName>
        <fullName evidence="1">NAD(P)H-dependent dihydroxyacetone-phosphate reductase</fullName>
    </alternativeName>
</protein>
<organism>
    <name type="scientific">Ruthia magnifica subsp. Calyptogena magnifica</name>
    <dbReference type="NCBI Taxonomy" id="413404"/>
    <lineage>
        <taxon>Bacteria</taxon>
        <taxon>Pseudomonadati</taxon>
        <taxon>Pseudomonadota</taxon>
        <taxon>Gammaproteobacteria</taxon>
        <taxon>Candidatus Pseudothioglobaceae</taxon>
        <taxon>Candidatus Ruthturnera</taxon>
    </lineage>
</organism>
<comment type="function">
    <text evidence="1">Catalyzes the reduction of the glycolytic intermediate dihydroxyacetone phosphate (DHAP) to sn-glycerol 3-phosphate (G3P), the key precursor for phospholipid synthesis.</text>
</comment>
<comment type="catalytic activity">
    <reaction evidence="1">
        <text>sn-glycerol 3-phosphate + NAD(+) = dihydroxyacetone phosphate + NADH + H(+)</text>
        <dbReference type="Rhea" id="RHEA:11092"/>
        <dbReference type="ChEBI" id="CHEBI:15378"/>
        <dbReference type="ChEBI" id="CHEBI:57540"/>
        <dbReference type="ChEBI" id="CHEBI:57597"/>
        <dbReference type="ChEBI" id="CHEBI:57642"/>
        <dbReference type="ChEBI" id="CHEBI:57945"/>
        <dbReference type="EC" id="1.1.1.94"/>
    </reaction>
    <physiologicalReaction direction="right-to-left" evidence="1">
        <dbReference type="Rhea" id="RHEA:11094"/>
    </physiologicalReaction>
</comment>
<comment type="catalytic activity">
    <reaction evidence="1">
        <text>sn-glycerol 3-phosphate + NADP(+) = dihydroxyacetone phosphate + NADPH + H(+)</text>
        <dbReference type="Rhea" id="RHEA:11096"/>
        <dbReference type="ChEBI" id="CHEBI:15378"/>
        <dbReference type="ChEBI" id="CHEBI:57597"/>
        <dbReference type="ChEBI" id="CHEBI:57642"/>
        <dbReference type="ChEBI" id="CHEBI:57783"/>
        <dbReference type="ChEBI" id="CHEBI:58349"/>
        <dbReference type="EC" id="1.1.1.94"/>
    </reaction>
    <physiologicalReaction direction="right-to-left" evidence="1">
        <dbReference type="Rhea" id="RHEA:11098"/>
    </physiologicalReaction>
</comment>
<comment type="pathway">
    <text evidence="1">Membrane lipid metabolism; glycerophospholipid metabolism.</text>
</comment>
<comment type="subcellular location">
    <subcellularLocation>
        <location evidence="1">Cytoplasm</location>
    </subcellularLocation>
</comment>
<comment type="similarity">
    <text evidence="1">Belongs to the NAD-dependent glycerol-3-phosphate dehydrogenase family.</text>
</comment>
<dbReference type="EC" id="1.1.1.94" evidence="1"/>
<dbReference type="EMBL" id="CP000488">
    <property type="protein sequence ID" value="ABL02647.1"/>
    <property type="molecule type" value="Genomic_DNA"/>
</dbReference>
<dbReference type="RefSeq" id="WP_011738272.1">
    <property type="nucleotide sequence ID" value="NC_008610.1"/>
</dbReference>
<dbReference type="SMR" id="A1AXJ0"/>
<dbReference type="STRING" id="413404.Rmag_0934"/>
<dbReference type="KEGG" id="rma:Rmag_0934"/>
<dbReference type="eggNOG" id="COG0240">
    <property type="taxonomic scope" value="Bacteria"/>
</dbReference>
<dbReference type="HOGENOM" id="CLU_033449_0_2_6"/>
<dbReference type="OrthoDB" id="9812273at2"/>
<dbReference type="UniPathway" id="UPA00940"/>
<dbReference type="Proteomes" id="UP000002587">
    <property type="component" value="Chromosome"/>
</dbReference>
<dbReference type="GO" id="GO:0005829">
    <property type="term" value="C:cytosol"/>
    <property type="evidence" value="ECO:0007669"/>
    <property type="project" value="TreeGrafter"/>
</dbReference>
<dbReference type="GO" id="GO:0047952">
    <property type="term" value="F:glycerol-3-phosphate dehydrogenase [NAD(P)+] activity"/>
    <property type="evidence" value="ECO:0007669"/>
    <property type="project" value="UniProtKB-UniRule"/>
</dbReference>
<dbReference type="GO" id="GO:0051287">
    <property type="term" value="F:NAD binding"/>
    <property type="evidence" value="ECO:0007669"/>
    <property type="project" value="InterPro"/>
</dbReference>
<dbReference type="GO" id="GO:0005975">
    <property type="term" value="P:carbohydrate metabolic process"/>
    <property type="evidence" value="ECO:0007669"/>
    <property type="project" value="InterPro"/>
</dbReference>
<dbReference type="GO" id="GO:0046167">
    <property type="term" value="P:glycerol-3-phosphate biosynthetic process"/>
    <property type="evidence" value="ECO:0007669"/>
    <property type="project" value="UniProtKB-UniRule"/>
</dbReference>
<dbReference type="GO" id="GO:0046168">
    <property type="term" value="P:glycerol-3-phosphate catabolic process"/>
    <property type="evidence" value="ECO:0007669"/>
    <property type="project" value="InterPro"/>
</dbReference>
<dbReference type="GO" id="GO:0046474">
    <property type="term" value="P:glycerophospholipid biosynthetic process"/>
    <property type="evidence" value="ECO:0007669"/>
    <property type="project" value="TreeGrafter"/>
</dbReference>
<dbReference type="FunFam" id="1.10.1040.10:FF:000001">
    <property type="entry name" value="Glycerol-3-phosphate dehydrogenase [NAD(P)+]"/>
    <property type="match status" value="1"/>
</dbReference>
<dbReference type="Gene3D" id="1.10.1040.10">
    <property type="entry name" value="N-(1-d-carboxylethyl)-l-norvaline Dehydrogenase, domain 2"/>
    <property type="match status" value="1"/>
</dbReference>
<dbReference type="Gene3D" id="3.40.50.720">
    <property type="entry name" value="NAD(P)-binding Rossmann-like Domain"/>
    <property type="match status" value="1"/>
</dbReference>
<dbReference type="HAMAP" id="MF_00394">
    <property type="entry name" value="NAD_Glyc3P_dehydrog"/>
    <property type="match status" value="1"/>
</dbReference>
<dbReference type="InterPro" id="IPR008927">
    <property type="entry name" value="6-PGluconate_DH-like_C_sf"/>
</dbReference>
<dbReference type="InterPro" id="IPR013328">
    <property type="entry name" value="6PGD_dom2"/>
</dbReference>
<dbReference type="InterPro" id="IPR006168">
    <property type="entry name" value="G3P_DH_NAD-dep"/>
</dbReference>
<dbReference type="InterPro" id="IPR006109">
    <property type="entry name" value="G3P_DH_NAD-dep_C"/>
</dbReference>
<dbReference type="InterPro" id="IPR011128">
    <property type="entry name" value="G3P_DH_NAD-dep_N"/>
</dbReference>
<dbReference type="InterPro" id="IPR036291">
    <property type="entry name" value="NAD(P)-bd_dom_sf"/>
</dbReference>
<dbReference type="NCBIfam" id="NF000940">
    <property type="entry name" value="PRK00094.1-2"/>
    <property type="match status" value="1"/>
</dbReference>
<dbReference type="NCBIfam" id="NF000942">
    <property type="entry name" value="PRK00094.1-4"/>
    <property type="match status" value="1"/>
</dbReference>
<dbReference type="PANTHER" id="PTHR11728">
    <property type="entry name" value="GLYCEROL-3-PHOSPHATE DEHYDROGENASE"/>
    <property type="match status" value="1"/>
</dbReference>
<dbReference type="PANTHER" id="PTHR11728:SF1">
    <property type="entry name" value="GLYCEROL-3-PHOSPHATE DEHYDROGENASE [NAD(+)] 2, CHLOROPLASTIC"/>
    <property type="match status" value="1"/>
</dbReference>
<dbReference type="Pfam" id="PF07479">
    <property type="entry name" value="NAD_Gly3P_dh_C"/>
    <property type="match status" value="1"/>
</dbReference>
<dbReference type="Pfam" id="PF01210">
    <property type="entry name" value="NAD_Gly3P_dh_N"/>
    <property type="match status" value="1"/>
</dbReference>
<dbReference type="PIRSF" id="PIRSF000114">
    <property type="entry name" value="Glycerol-3-P_dh"/>
    <property type="match status" value="1"/>
</dbReference>
<dbReference type="PRINTS" id="PR00077">
    <property type="entry name" value="GPDHDRGNASE"/>
</dbReference>
<dbReference type="SUPFAM" id="SSF48179">
    <property type="entry name" value="6-phosphogluconate dehydrogenase C-terminal domain-like"/>
    <property type="match status" value="1"/>
</dbReference>
<dbReference type="SUPFAM" id="SSF51735">
    <property type="entry name" value="NAD(P)-binding Rossmann-fold domains"/>
    <property type="match status" value="1"/>
</dbReference>
<dbReference type="PROSITE" id="PS00957">
    <property type="entry name" value="NAD_G3PDH"/>
    <property type="match status" value="1"/>
</dbReference>
<keyword id="KW-0963">Cytoplasm</keyword>
<keyword id="KW-0444">Lipid biosynthesis</keyword>
<keyword id="KW-0443">Lipid metabolism</keyword>
<keyword id="KW-0520">NAD</keyword>
<keyword id="KW-0521">NADP</keyword>
<keyword id="KW-0547">Nucleotide-binding</keyword>
<keyword id="KW-0560">Oxidoreductase</keyword>
<keyword id="KW-0594">Phospholipid biosynthesis</keyword>
<keyword id="KW-1208">Phospholipid metabolism</keyword>
<proteinExistence type="inferred from homology"/>
<sequence>MSKNLSIIGAGAWGSALAIALYDNFDTIYLHAHTQDEVKILKPKYSALYPNNIKITCDFSKLQNSKDILIVTPSYAFSEVLEKIKPLISSAHQIAWGTKGFDTTKRCFLYESFERIFPNRNGCVISGPSFAFEVATNKPTALVVASVDKNTRKHFAKLIQTTTIRAYTNADIIGVEIGGSIKNILAIAAGIAAGLGYGINTQAALITRGLAEMSRLGVSLGAKNSTFVGLSGLGDLVLTCSDDLSRNRRFGKELAFNHSIKSALYNIGSTVEGLNTLELILSIANKKQVEMPICEQVYQVTQGKITPTEVVNYLMSREQTNE</sequence>
<reference key="1">
    <citation type="journal article" date="2007" name="Science">
        <title>The Calyptogena magnifica chemoautotrophic symbiont genome.</title>
        <authorList>
            <person name="Newton I.L.G."/>
            <person name="Woyke T."/>
            <person name="Auchtung T.A."/>
            <person name="Dilly G.F."/>
            <person name="Dutton R.J."/>
            <person name="Fisher M.C."/>
            <person name="Fontanez K.M."/>
            <person name="Lau E."/>
            <person name="Stewart F.J."/>
            <person name="Richardson P.M."/>
            <person name="Barry K.W."/>
            <person name="Saunders E."/>
            <person name="Detter J.C."/>
            <person name="Wu D."/>
            <person name="Eisen J.A."/>
            <person name="Cavanaugh C.M."/>
        </authorList>
    </citation>
    <scope>NUCLEOTIDE SEQUENCE [LARGE SCALE GENOMIC DNA]</scope>
</reference>
<name>GPDA_RUTMC</name>